<accession>Q6DJ71</accession>
<comment type="function">
    <text evidence="1">Regulates actin polymerization by inhibiting the actin-nucleating activity of the Arp2/3 complex; the function is competitive with nucleation promoting factors. Involved in steering cell migration by controlling its directional persistence (By similarity).</text>
</comment>
<comment type="subunit">
    <text evidence="1">Associates with the Arp2/3 complex.</text>
</comment>
<comment type="subcellular location">
    <subcellularLocation>
        <location evidence="1">Cell projection</location>
        <location evidence="1">Lamellipodium</location>
    </subcellularLocation>
</comment>
<comment type="domain">
    <text evidence="1">The acidic C-terminus is necessary and sufficient to inhibit ARP2/3 complex activity.</text>
</comment>
<comment type="similarity">
    <text evidence="3">Belongs to the Arpin family.</text>
</comment>
<sequence length="226" mass="25505">MSRIYHNTSLRNKPVHDERIAGSWEPTAFQRGAGVLLEGTLLDFSRHSLTDSKGKKERWYILYLMPSKIHRRHFDSKGNEIEPNFSDTKKVNTGFLMSSYKVEAKGESDKISVEELIQLVNKVELMKISEKYTPRETVAFWLPEVDVEKTELELGEQLRVKTMGDSPFVFSLAKVDSGTVTKCNFAGDAQAGASWTDNIMAQKSQSTSACFEPRGQGDGAEDDEWD</sequence>
<name>ARPIN_XENTR</name>
<gene>
    <name type="primary">arpin</name>
</gene>
<protein>
    <recommendedName>
        <fullName>Arpin</fullName>
    </recommendedName>
</protein>
<evidence type="ECO:0000250" key="1"/>
<evidence type="ECO:0000256" key="2">
    <source>
        <dbReference type="SAM" id="MobiDB-lite"/>
    </source>
</evidence>
<evidence type="ECO:0000305" key="3"/>
<dbReference type="EMBL" id="BC075312">
    <property type="protein sequence ID" value="AAH75312.1"/>
    <property type="molecule type" value="mRNA"/>
</dbReference>
<dbReference type="RefSeq" id="NP_001004898.1">
    <property type="nucleotide sequence ID" value="NM_001004898.1"/>
</dbReference>
<dbReference type="RefSeq" id="XP_012814274.1">
    <property type="nucleotide sequence ID" value="XM_012958820.3"/>
</dbReference>
<dbReference type="RefSeq" id="XP_012814275.1">
    <property type="nucleotide sequence ID" value="XM_012958821.3"/>
</dbReference>
<dbReference type="SMR" id="Q6DJ71"/>
<dbReference type="FunCoup" id="Q6DJ71">
    <property type="interactions" value="76"/>
</dbReference>
<dbReference type="STRING" id="8364.ENSXETP00000045881"/>
<dbReference type="PaxDb" id="8364-ENSXETP00000057538"/>
<dbReference type="DNASU" id="448248"/>
<dbReference type="GeneID" id="448248"/>
<dbReference type="KEGG" id="xtr:448248"/>
<dbReference type="AGR" id="Xenbase:XB-GENE-941490"/>
<dbReference type="CTD" id="348110"/>
<dbReference type="eggNOG" id="ENOG502R4IG">
    <property type="taxonomic scope" value="Eukaryota"/>
</dbReference>
<dbReference type="HOGENOM" id="CLU_106544_0_0_1"/>
<dbReference type="InParanoid" id="Q6DJ71"/>
<dbReference type="OMA" id="QTVAFWI"/>
<dbReference type="OrthoDB" id="5953051at2759"/>
<dbReference type="PhylomeDB" id="Q6DJ71"/>
<dbReference type="Proteomes" id="UP000008143">
    <property type="component" value="Chromosome 3"/>
</dbReference>
<dbReference type="Bgee" id="ENSXETG00000012972">
    <property type="expression patterns" value="Expressed in mesonephros and 13 other cell types or tissues"/>
</dbReference>
<dbReference type="GO" id="GO:0030027">
    <property type="term" value="C:lamellipodium"/>
    <property type="evidence" value="ECO:0000250"/>
    <property type="project" value="UniProtKB"/>
</dbReference>
<dbReference type="GO" id="GO:0033058">
    <property type="term" value="P:directional locomotion"/>
    <property type="evidence" value="ECO:0000250"/>
    <property type="project" value="UniProtKB"/>
</dbReference>
<dbReference type="GO" id="GO:0051126">
    <property type="term" value="P:negative regulation of actin nucleation"/>
    <property type="evidence" value="ECO:0000250"/>
    <property type="project" value="UniProtKB"/>
</dbReference>
<dbReference type="GO" id="GO:0030336">
    <property type="term" value="P:negative regulation of cell migration"/>
    <property type="evidence" value="ECO:0000250"/>
    <property type="project" value="UniProtKB"/>
</dbReference>
<dbReference type="GO" id="GO:2000393">
    <property type="term" value="P:negative regulation of lamellipodium morphogenesis"/>
    <property type="evidence" value="ECO:0000250"/>
    <property type="project" value="UniProtKB"/>
</dbReference>
<dbReference type="InterPro" id="IPR018889">
    <property type="entry name" value="Arpin"/>
</dbReference>
<dbReference type="PANTHER" id="PTHR31199">
    <property type="entry name" value="ARPIN"/>
    <property type="match status" value="1"/>
</dbReference>
<dbReference type="PANTHER" id="PTHR31199:SF1">
    <property type="entry name" value="ARPIN"/>
    <property type="match status" value="1"/>
</dbReference>
<dbReference type="Pfam" id="PF10574">
    <property type="entry name" value="UPF0552"/>
    <property type="match status" value="1"/>
</dbReference>
<reference key="1">
    <citation type="submission" date="2004-06" db="EMBL/GenBank/DDBJ databases">
        <authorList>
            <consortium name="NIH - Xenopus Gene Collection (XGC) project"/>
        </authorList>
    </citation>
    <scope>NUCLEOTIDE SEQUENCE [LARGE SCALE MRNA]</scope>
</reference>
<keyword id="KW-0966">Cell projection</keyword>
<keyword id="KW-1185">Reference proteome</keyword>
<feature type="chain" id="PRO_0000327663" description="Arpin">
    <location>
        <begin position="1"/>
        <end position="226"/>
    </location>
</feature>
<feature type="region of interest" description="Disordered" evidence="2">
    <location>
        <begin position="204"/>
        <end position="226"/>
    </location>
</feature>
<organism>
    <name type="scientific">Xenopus tropicalis</name>
    <name type="common">Western clawed frog</name>
    <name type="synonym">Silurana tropicalis</name>
    <dbReference type="NCBI Taxonomy" id="8364"/>
    <lineage>
        <taxon>Eukaryota</taxon>
        <taxon>Metazoa</taxon>
        <taxon>Chordata</taxon>
        <taxon>Craniata</taxon>
        <taxon>Vertebrata</taxon>
        <taxon>Euteleostomi</taxon>
        <taxon>Amphibia</taxon>
        <taxon>Batrachia</taxon>
        <taxon>Anura</taxon>
        <taxon>Pipoidea</taxon>
        <taxon>Pipidae</taxon>
        <taxon>Xenopodinae</taxon>
        <taxon>Xenopus</taxon>
        <taxon>Silurana</taxon>
    </lineage>
</organism>
<proteinExistence type="evidence at transcript level"/>